<protein>
    <recommendedName>
        <fullName evidence="1">Geranylgeranyl pyrophosphate synthase ltmG</fullName>
        <shortName evidence="7">GGPP synthase</shortName>
        <shortName evidence="7">GGPPSase</shortName>
        <ecNumber evidence="7">2.5.1.-</ecNumber>
    </recommendedName>
    <alternativeName>
        <fullName evidence="1">(2E,6E)-farnesyl diphosphate synthase</fullName>
    </alternativeName>
    <alternativeName>
        <fullName evidence="1">Dimethylallyltranstransferase</fullName>
        <ecNumber evidence="1">2.5.1.1</ecNumber>
    </alternativeName>
    <alternativeName>
        <fullName evidence="1">Farnesyl diphosphate synthase</fullName>
    </alternativeName>
    <alternativeName>
        <fullName evidence="1">Farnesyltranstransferase</fullName>
        <ecNumber evidence="1">2.5.1.29</ecNumber>
    </alternativeName>
    <alternativeName>
        <fullName evidence="1">Geranylgeranyl diphosphate synthase</fullName>
    </alternativeName>
    <alternativeName>
        <fullName evidence="1">Geranyltranstransferase</fullName>
        <ecNumber evidence="1">2.5.1.10</ecNumber>
    </alternativeName>
    <alternativeName>
        <fullName evidence="6">Lolitrem B biosynthesis cluster 1 protein G</fullName>
    </alternativeName>
</protein>
<organism>
    <name type="scientific">Epichloe festucae (strain Fl1)</name>
    <dbReference type="NCBI Taxonomy" id="877507"/>
    <lineage>
        <taxon>Eukaryota</taxon>
        <taxon>Fungi</taxon>
        <taxon>Dikarya</taxon>
        <taxon>Ascomycota</taxon>
        <taxon>Pezizomycotina</taxon>
        <taxon>Sordariomycetes</taxon>
        <taxon>Hypocreomycetidae</taxon>
        <taxon>Hypocreales</taxon>
        <taxon>Clavicipitaceae</taxon>
        <taxon>Epichloe</taxon>
    </lineage>
</organism>
<comment type="function">
    <text evidence="2 3 5">Geranylgeranyl pyrophosphate synthase; part of the gene cluster that mediates the biosynthesis of lolitrems, indole-diterpene mycotoxins that are potent tremorgens in mammals, and are synthesized by clavicipitaceous fungal endophytes in association with their grass hosts (PubMed:16765617). The geranylgeranyl diphosphate (GGPP) synthase ltmG is proposed to catalyze the first step in lolitrem biosynthesis (PubMed:15991026, PubMed:16765617). LtmG catalyzes a series of iterative condensations of isopentenyl diphosphate (IPP) with dimethylallyl diphosphate (DMAPP), geranyl diphosphate (GPP), and farnesyl diphosphate (FPP), to form GGPP (PubMed:15991026, PubMed:16765617). GGPP then condenses with indole-3-glycerol phosphate to form 3-geranylgeranylindole, an acyclic intermediate, to be incorporated into paxilline (PubMed:16765617). Either ltmG or ltmC could be responsible for this step, as both are putative prenyl transferases (PubMed:16765617). The FAD-dependent monooxygenase ltmM then catalyzes the epoxidation of the two terminal alkenes of the geranylgeranyl moiety, which is subsequently cyclized by ltmB, to paspaline (PubMed:15991026, PubMed:16765617). The cytochrome P450 monooxygenases ltmQ and ltmP can sequentially oxidize paspaline to terpendole E and terpendole F (PubMed:22750140). Alternatively, ltmP converts paspaline to an intermediate which is oxidized by ltmQ to terpendole F (PubMed:22750140). LtmF, ltmK, ltmE and ltmJ appear to be unique to the epichloe endophytes (PubMed:15991026, PubMed:16765617). The prenyltransferase ltmF is involved in the 27-hydroxyl-O-prenylation (PubMed:22750140). The cytochrome P450 monooxygenase ltmK is required for the oxidative acetal ring formation (PubMed:22750140). The multi-functional prenyltransferase ltmE is required for C20- and C21-prenylations of the indole ring of paspalanes and acts together with the cytochrome P450 monooxygenase ltmJ to yield lolitremanes by multiple oxidations and ring closures (PubMed:22750140). The stereoisomer pairs of lolitriol and lolitrem N or lolitrem B and lolitrem F may be attributed to variations in the way in which ring closure can occur under the action of ltmJ (PubMed:22750140). While the major product of this pathway is lolitrem B, the prenyl transferases and cytochrome P450 monooxygenases identified in this pathway have a remarkable versatility in their regio- and stereo-specificities to generate a diverse range of metabolites that are products of a metabolic grid rather than a linear pathway (PubMed:22750140).</text>
</comment>
<comment type="catalytic activity">
    <reaction evidence="1">
        <text>isopentenyl diphosphate + dimethylallyl diphosphate = (2E)-geranyl diphosphate + diphosphate</text>
        <dbReference type="Rhea" id="RHEA:22408"/>
        <dbReference type="ChEBI" id="CHEBI:33019"/>
        <dbReference type="ChEBI" id="CHEBI:57623"/>
        <dbReference type="ChEBI" id="CHEBI:58057"/>
        <dbReference type="ChEBI" id="CHEBI:128769"/>
        <dbReference type="EC" id="2.5.1.1"/>
    </reaction>
</comment>
<comment type="catalytic activity">
    <reaction evidence="1">
        <text>isopentenyl diphosphate + (2E)-geranyl diphosphate = (2E,6E)-farnesyl diphosphate + diphosphate</text>
        <dbReference type="Rhea" id="RHEA:19361"/>
        <dbReference type="ChEBI" id="CHEBI:33019"/>
        <dbReference type="ChEBI" id="CHEBI:58057"/>
        <dbReference type="ChEBI" id="CHEBI:128769"/>
        <dbReference type="ChEBI" id="CHEBI:175763"/>
        <dbReference type="EC" id="2.5.1.10"/>
    </reaction>
</comment>
<comment type="catalytic activity">
    <reaction evidence="1">
        <text>isopentenyl diphosphate + (2E,6E)-farnesyl diphosphate = (2E,6E,10E)-geranylgeranyl diphosphate + diphosphate</text>
        <dbReference type="Rhea" id="RHEA:17653"/>
        <dbReference type="ChEBI" id="CHEBI:33019"/>
        <dbReference type="ChEBI" id="CHEBI:58756"/>
        <dbReference type="ChEBI" id="CHEBI:128769"/>
        <dbReference type="ChEBI" id="CHEBI:175763"/>
        <dbReference type="EC" id="2.5.1.29"/>
    </reaction>
</comment>
<comment type="cofactor">
    <cofactor evidence="1">
        <name>Mg(2+)</name>
        <dbReference type="ChEBI" id="CHEBI:18420"/>
    </cofactor>
    <text evidence="1">Binds 3 Mg(2+) ions per subunit.</text>
</comment>
<comment type="pathway">
    <text evidence="8">Secondary metabolite biosynthesis.</text>
</comment>
<comment type="induction">
    <text evidence="4">Expression is down-regulated when the stress-activated mitogen-activated protein kinase (sakA) is deleted (PubMed:20519633).</text>
</comment>
<comment type="similarity">
    <text evidence="7">Belongs to the FPP/GGPP synthase family.</text>
</comment>
<evidence type="ECO:0000250" key="1">
    <source>
        <dbReference type="UniProtKB" id="Q12051"/>
    </source>
</evidence>
<evidence type="ECO:0000269" key="2">
    <source>
    </source>
</evidence>
<evidence type="ECO:0000269" key="3">
    <source>
    </source>
</evidence>
<evidence type="ECO:0000269" key="4">
    <source>
    </source>
</evidence>
<evidence type="ECO:0000269" key="5">
    <source>
    </source>
</evidence>
<evidence type="ECO:0000303" key="6">
    <source>
    </source>
</evidence>
<evidence type="ECO:0000305" key="7"/>
<evidence type="ECO:0000305" key="8">
    <source>
    </source>
</evidence>
<feature type="chain" id="PRO_0000444327" description="Geranylgeranyl pyrophosphate synthase ltmG">
    <location>
        <begin position="1"/>
        <end position="334"/>
    </location>
</feature>
<feature type="binding site" evidence="1">
    <location>
        <position position="53"/>
    </location>
    <ligand>
        <name>isopentenyl diphosphate</name>
        <dbReference type="ChEBI" id="CHEBI:128769"/>
    </ligand>
</feature>
<feature type="binding site" evidence="1">
    <location>
        <position position="56"/>
    </location>
    <ligand>
        <name>isopentenyl diphosphate</name>
        <dbReference type="ChEBI" id="CHEBI:128769"/>
    </ligand>
</feature>
<feature type="binding site" evidence="1">
    <location>
        <position position="85"/>
    </location>
    <ligand>
        <name>isopentenyl diphosphate</name>
        <dbReference type="ChEBI" id="CHEBI:128769"/>
    </ligand>
</feature>
<feature type="binding site" evidence="1">
    <location>
        <position position="92"/>
    </location>
    <ligand>
        <name>Mg(2+)</name>
        <dbReference type="ChEBI" id="CHEBI:18420"/>
        <label>1</label>
    </ligand>
</feature>
<feature type="binding site" evidence="1">
    <location>
        <position position="92"/>
    </location>
    <ligand>
        <name>Mg(2+)</name>
        <dbReference type="ChEBI" id="CHEBI:18420"/>
        <label>2</label>
    </ligand>
</feature>
<feature type="binding site" evidence="1">
    <location>
        <position position="96"/>
    </location>
    <ligand>
        <name>Mg(2+)</name>
        <dbReference type="ChEBI" id="CHEBI:18420"/>
        <label>1</label>
    </ligand>
</feature>
<feature type="binding site" evidence="1">
    <location>
        <position position="96"/>
    </location>
    <ligand>
        <name>Mg(2+)</name>
        <dbReference type="ChEBI" id="CHEBI:18420"/>
        <label>2</label>
    </ligand>
</feature>
<feature type="binding site" evidence="1">
    <location>
        <position position="101"/>
    </location>
    <ligand>
        <name>dimethylallyl diphosphate</name>
        <dbReference type="ChEBI" id="CHEBI:57623"/>
    </ligand>
</feature>
<feature type="binding site" evidence="1">
    <location>
        <position position="102"/>
    </location>
    <ligand>
        <name>isopentenyl diphosphate</name>
        <dbReference type="ChEBI" id="CHEBI:128769"/>
    </ligand>
</feature>
<feature type="binding site" evidence="1">
    <location>
        <position position="179"/>
    </location>
    <ligand>
        <name>dimethylallyl diphosphate</name>
        <dbReference type="ChEBI" id="CHEBI:57623"/>
    </ligand>
</feature>
<feature type="binding site" evidence="1">
    <location>
        <position position="180"/>
    </location>
    <ligand>
        <name>dimethylallyl diphosphate</name>
        <dbReference type="ChEBI" id="CHEBI:57623"/>
    </ligand>
</feature>
<feature type="binding site" evidence="1">
    <location>
        <position position="213"/>
    </location>
    <ligand>
        <name>dimethylallyl diphosphate</name>
        <dbReference type="ChEBI" id="CHEBI:57623"/>
    </ligand>
</feature>
<feature type="binding site" evidence="1">
    <location>
        <position position="216"/>
    </location>
    <ligand>
        <name>Mg(2+)</name>
        <dbReference type="ChEBI" id="CHEBI:18420"/>
        <label>3</label>
    </ligand>
</feature>
<feature type="binding site" evidence="1">
    <location>
        <position position="220"/>
    </location>
    <ligand>
        <name>dimethylallyl diphosphate</name>
        <dbReference type="ChEBI" id="CHEBI:57623"/>
    </ligand>
</feature>
<feature type="binding site" evidence="1">
    <location>
        <position position="230"/>
    </location>
    <ligand>
        <name>dimethylallyl diphosphate</name>
        <dbReference type="ChEBI" id="CHEBI:57623"/>
    </ligand>
</feature>
<feature type="binding site" evidence="1">
    <location>
        <position position="240"/>
    </location>
    <ligand>
        <name>dimethylallyl diphosphate</name>
        <dbReference type="ChEBI" id="CHEBI:57623"/>
    </ligand>
</feature>
<feature type="site" description="Important for determining product chain length" evidence="1">
    <location>
        <position position="124"/>
    </location>
</feature>
<accession>Q56RZ3</accession>
<sequence>MTMAANDFPFQCQEKKSYSQPSLVYCNGNIAETYLEEKVLTAPLDYLRALPSKDIRSGLTDAINEFLRVPEEKVLVIKRIIDLLHNASLLIDDIQDSSKLRRGVPVAHHIFGIAQTINSANLAYFIAQRELEKLTNPRAFAIYNEELINLHRGQGMELHWRESLHCPTEDEYLRMIQKKTGGLFRLAIRLLQGESASDDDYVSLIDTLGTLFQIRDDYQNLQSDIYSKNKGYCEDLTEGKFSYPVIHSIRSRPGDVRLINILKQRSEDVMVKQYAVQHIESTGSFAFCQNKIQSLVEQAREQLAALENSSSCGGPVRDILDKLAIKPRANIEVE</sequence>
<dbReference type="EC" id="2.5.1.-" evidence="7"/>
<dbReference type="EC" id="2.5.1.1" evidence="1"/>
<dbReference type="EC" id="2.5.1.29" evidence="1"/>
<dbReference type="EC" id="2.5.1.10" evidence="1"/>
<dbReference type="EMBL" id="AY742905">
    <property type="protein sequence ID" value="AAW88514.1"/>
    <property type="molecule type" value="Genomic_DNA"/>
</dbReference>
<dbReference type="EMBL" id="JN613320">
    <property type="protein sequence ID" value="AFO85411.1"/>
    <property type="molecule type" value="Genomic_DNA"/>
</dbReference>
<dbReference type="SMR" id="Q56RZ3"/>
<dbReference type="GO" id="GO:0004337">
    <property type="term" value="F:(2E,6E)-farnesyl diphosphate synthase activity"/>
    <property type="evidence" value="ECO:0007669"/>
    <property type="project" value="UniProtKB-EC"/>
</dbReference>
<dbReference type="GO" id="GO:0004161">
    <property type="term" value="F:dimethylallyltranstransferase activity"/>
    <property type="evidence" value="ECO:0007669"/>
    <property type="project" value="UniProtKB-EC"/>
</dbReference>
<dbReference type="GO" id="GO:0004311">
    <property type="term" value="F:geranylgeranyl diphosphate synthase activity"/>
    <property type="evidence" value="ECO:0007669"/>
    <property type="project" value="UniProtKB-EC"/>
</dbReference>
<dbReference type="GO" id="GO:0046872">
    <property type="term" value="F:metal ion binding"/>
    <property type="evidence" value="ECO:0007669"/>
    <property type="project" value="UniProtKB-KW"/>
</dbReference>
<dbReference type="GO" id="GO:0046165">
    <property type="term" value="P:alcohol biosynthetic process"/>
    <property type="evidence" value="ECO:0007669"/>
    <property type="project" value="UniProtKB-ARBA"/>
</dbReference>
<dbReference type="GO" id="GO:0008299">
    <property type="term" value="P:isoprenoid biosynthetic process"/>
    <property type="evidence" value="ECO:0007669"/>
    <property type="project" value="InterPro"/>
</dbReference>
<dbReference type="GO" id="GO:0043386">
    <property type="term" value="P:mycotoxin biosynthetic process"/>
    <property type="evidence" value="ECO:0007669"/>
    <property type="project" value="UniProtKB-ARBA"/>
</dbReference>
<dbReference type="CDD" id="cd00685">
    <property type="entry name" value="Trans_IPPS_HT"/>
    <property type="match status" value="1"/>
</dbReference>
<dbReference type="Gene3D" id="1.10.600.10">
    <property type="entry name" value="Farnesyl Diphosphate Synthase"/>
    <property type="match status" value="1"/>
</dbReference>
<dbReference type="InterPro" id="IPR008949">
    <property type="entry name" value="Isoprenoid_synthase_dom_sf"/>
</dbReference>
<dbReference type="InterPro" id="IPR000092">
    <property type="entry name" value="Polyprenyl_synt"/>
</dbReference>
<dbReference type="InterPro" id="IPR033749">
    <property type="entry name" value="Polyprenyl_synt_CS"/>
</dbReference>
<dbReference type="PANTHER" id="PTHR12001">
    <property type="entry name" value="GERANYLGERANYL PYROPHOSPHATE SYNTHASE"/>
    <property type="match status" value="1"/>
</dbReference>
<dbReference type="PANTHER" id="PTHR12001:SF70">
    <property type="entry name" value="PYROPHOSPHATE SYNTHETASE ATMG, PUTATIVE (AFU_ORTHOLOGUE AFUA_8G02400)-RELATED"/>
    <property type="match status" value="1"/>
</dbReference>
<dbReference type="Pfam" id="PF00348">
    <property type="entry name" value="polyprenyl_synt"/>
    <property type="match status" value="1"/>
</dbReference>
<dbReference type="SFLD" id="SFLDS00005">
    <property type="entry name" value="Isoprenoid_Synthase_Type_I"/>
    <property type="match status" value="1"/>
</dbReference>
<dbReference type="SUPFAM" id="SSF48576">
    <property type="entry name" value="Terpenoid synthases"/>
    <property type="match status" value="1"/>
</dbReference>
<dbReference type="PROSITE" id="PS00723">
    <property type="entry name" value="POLYPRENYL_SYNTHASE_1"/>
    <property type="match status" value="1"/>
</dbReference>
<dbReference type="PROSITE" id="PS00444">
    <property type="entry name" value="POLYPRENYL_SYNTHASE_2"/>
    <property type="match status" value="1"/>
</dbReference>
<proteinExistence type="evidence at transcript level"/>
<keyword id="KW-0460">Magnesium</keyword>
<keyword id="KW-0479">Metal-binding</keyword>
<keyword id="KW-0808">Transferase</keyword>
<reference key="1">
    <citation type="journal article" date="2005" name="Mol. Genet. Genomics">
        <title>Molecular cloning and genetic analysis of a symbiosis-expressed gene cluster for lolitrem biosynthesis from a mutualistic endophyte of perennial ryegrass.</title>
        <authorList>
            <person name="Young C.A."/>
            <person name="Bryant M.K."/>
            <person name="Christensen M.J."/>
            <person name="Tapper B.A."/>
            <person name="Bryan G.T."/>
            <person name="Scott B."/>
        </authorList>
    </citation>
    <scope>NUCLEOTIDE SEQUENCE [GENOMIC DNA]</scope>
    <source>
        <strain>Fl1</strain>
    </source>
</reference>
<reference key="2">
    <citation type="submission" date="2011-08" db="EMBL/GenBank/DDBJ databases">
        <title>Epichloe festucae IDT gene cluster.</title>
        <authorList>
            <person name="Young C.A."/>
            <person name="Schardl C.L."/>
        </authorList>
    </citation>
    <scope>NUCLEOTIDE SEQUENCE [GENOMIC DNA]</scope>
    <source>
        <strain>E894</strain>
    </source>
</reference>
<reference key="3">
    <citation type="journal article" date="2006" name="Fungal Genet. Biol.">
        <title>A complex gene cluster for indole-diterpene biosynthesis in the grass endophyte Neotyphodium lolii.</title>
        <authorList>
            <person name="Young C.A."/>
            <person name="Felitti S."/>
            <person name="Shields K."/>
            <person name="Spangenberg G."/>
            <person name="Johnson R.D."/>
            <person name="Bryan G.T."/>
            <person name="Saikia S."/>
            <person name="Scott B."/>
        </authorList>
    </citation>
    <scope>FUNCTION</scope>
</reference>
<reference key="4">
    <citation type="journal article" date="2010" name="Plant Physiol.">
        <title>Disruption of signaling in a fungal-grass symbiosis leads to pathogenesis.</title>
        <authorList>
            <person name="Eaton C.J."/>
            <person name="Cox M.P."/>
            <person name="Ambrose B."/>
            <person name="Becker M."/>
            <person name="Hesse U."/>
            <person name="Schardl C.L."/>
            <person name="Scott B."/>
        </authorList>
    </citation>
    <scope>INDUCTION</scope>
</reference>
<reference key="5">
    <citation type="journal article" date="2012" name="FEBS Lett.">
        <title>Functional analysis of an indole-diterpene gene cluster for lolitrem B biosynthesis in the grass endosymbiont Epichloe festucae.</title>
        <authorList>
            <person name="Saikia S."/>
            <person name="Takemoto D."/>
            <person name="Tapper B.A."/>
            <person name="Lane G.A."/>
            <person name="Fraser K."/>
            <person name="Scott B."/>
        </authorList>
    </citation>
    <scope>FUNCTION</scope>
</reference>
<name>LTMG_EPIFF</name>
<gene>
    <name evidence="6" type="primary">ltmG</name>
</gene>